<organism>
    <name type="scientific">Spermophilopsis leptodactylus</name>
    <name type="common">Long-clawed ground squirrel</name>
    <dbReference type="NCBI Taxonomy" id="99871"/>
    <lineage>
        <taxon>Eukaryota</taxon>
        <taxon>Metazoa</taxon>
        <taxon>Chordata</taxon>
        <taxon>Craniata</taxon>
        <taxon>Vertebrata</taxon>
        <taxon>Euteleostomi</taxon>
        <taxon>Mammalia</taxon>
        <taxon>Eutheria</taxon>
        <taxon>Euarchontoglires</taxon>
        <taxon>Glires</taxon>
        <taxon>Rodentia</taxon>
        <taxon>Sciuromorpha</taxon>
        <taxon>Sciuridae</taxon>
        <taxon>Xerinae</taxon>
        <taxon>Xerini</taxon>
        <taxon>Spermophilopsis</taxon>
    </lineage>
</organism>
<sequence length="379" mass="42896">MTNIRKTHPLXKIVNHSFIDLPTPSNISAWWNFGSLLGICLIIQILTGLFLAMHYTSDTTTAFSSVTHICRDVNYGWLIRYMHANGASMFFICLFLHVGRGLYYGSYTYFETWNIGVILLFTVMATAFMGYVLPWGQMSFLGATVITNLLSAIPYVGTNLVEWIWGGFSVDKATLTRFFAFHFILPFVIAALAMVHLLFLHETGSNNPTGLISDSXKIPFHPYYTIKDILGLLILILVLMILVLFSPDLLGDPDNYTPXNPLNTPPHIKPEWYFLFAYAILRSIPNKLGGVLALVFSILILILFPVLHTSKQRSMMFRPLSQCLFWILVADLLTLTWIGGQPVEHPFIIIGQLASILYFTIILFILPIASMIENKLLKW</sequence>
<protein>
    <recommendedName>
        <fullName>Cytochrome b</fullName>
    </recommendedName>
    <alternativeName>
        <fullName>Complex III subunit 3</fullName>
    </alternativeName>
    <alternativeName>
        <fullName>Complex III subunit III</fullName>
    </alternativeName>
    <alternativeName>
        <fullName>Cytochrome b-c1 complex subunit 3</fullName>
    </alternativeName>
    <alternativeName>
        <fullName>Ubiquinol-cytochrome-c reductase complex cytochrome b subunit</fullName>
    </alternativeName>
</protein>
<feature type="chain" id="PRO_0000257939" description="Cytochrome b">
    <location>
        <begin position="1"/>
        <end position="379"/>
    </location>
</feature>
<feature type="transmembrane region" description="Helical" evidence="2">
    <location>
        <begin position="33"/>
        <end position="53"/>
    </location>
</feature>
<feature type="transmembrane region" description="Helical" evidence="2">
    <location>
        <begin position="77"/>
        <end position="98"/>
    </location>
</feature>
<feature type="transmembrane region" description="Helical" evidence="2">
    <location>
        <begin position="113"/>
        <end position="133"/>
    </location>
</feature>
<feature type="transmembrane region" description="Helical" evidence="2">
    <location>
        <begin position="178"/>
        <end position="198"/>
    </location>
</feature>
<feature type="transmembrane region" description="Helical" evidence="2">
    <location>
        <begin position="226"/>
        <end position="246"/>
    </location>
</feature>
<feature type="transmembrane region" description="Helical" evidence="2">
    <location>
        <begin position="288"/>
        <end position="308"/>
    </location>
</feature>
<feature type="transmembrane region" description="Helical" evidence="2">
    <location>
        <begin position="320"/>
        <end position="340"/>
    </location>
</feature>
<feature type="transmembrane region" description="Helical" evidence="2">
    <location>
        <begin position="347"/>
        <end position="367"/>
    </location>
</feature>
<feature type="binding site" description="axial binding residue" evidence="2">
    <location>
        <position position="83"/>
    </location>
    <ligand>
        <name>heme b</name>
        <dbReference type="ChEBI" id="CHEBI:60344"/>
        <label>b562</label>
    </ligand>
    <ligandPart>
        <name>Fe</name>
        <dbReference type="ChEBI" id="CHEBI:18248"/>
    </ligandPart>
</feature>
<feature type="binding site" description="axial binding residue" evidence="2">
    <location>
        <position position="97"/>
    </location>
    <ligand>
        <name>heme b</name>
        <dbReference type="ChEBI" id="CHEBI:60344"/>
        <label>b566</label>
    </ligand>
    <ligandPart>
        <name>Fe</name>
        <dbReference type="ChEBI" id="CHEBI:18248"/>
    </ligandPart>
</feature>
<feature type="binding site" description="axial binding residue" evidence="2">
    <location>
        <position position="182"/>
    </location>
    <ligand>
        <name>heme b</name>
        <dbReference type="ChEBI" id="CHEBI:60344"/>
        <label>b562</label>
    </ligand>
    <ligandPart>
        <name>Fe</name>
        <dbReference type="ChEBI" id="CHEBI:18248"/>
    </ligandPart>
</feature>
<feature type="binding site" description="axial binding residue" evidence="2">
    <location>
        <position position="196"/>
    </location>
    <ligand>
        <name>heme b</name>
        <dbReference type="ChEBI" id="CHEBI:60344"/>
        <label>b566</label>
    </ligand>
    <ligandPart>
        <name>Fe</name>
        <dbReference type="ChEBI" id="CHEBI:18248"/>
    </ligandPart>
</feature>
<feature type="binding site" evidence="2">
    <location>
        <position position="201"/>
    </location>
    <ligand>
        <name>a ubiquinone</name>
        <dbReference type="ChEBI" id="CHEBI:16389"/>
    </ligand>
</feature>
<geneLocation type="mitochondrion"/>
<dbReference type="EMBL" id="AF157865">
    <property type="protein sequence ID" value="AAD50149.1"/>
    <property type="molecule type" value="Genomic_DNA"/>
</dbReference>
<dbReference type="GO" id="GO:0005743">
    <property type="term" value="C:mitochondrial inner membrane"/>
    <property type="evidence" value="ECO:0007669"/>
    <property type="project" value="UniProtKB-SubCell"/>
</dbReference>
<dbReference type="GO" id="GO:0045275">
    <property type="term" value="C:respiratory chain complex III"/>
    <property type="evidence" value="ECO:0007669"/>
    <property type="project" value="InterPro"/>
</dbReference>
<dbReference type="GO" id="GO:0046872">
    <property type="term" value="F:metal ion binding"/>
    <property type="evidence" value="ECO:0007669"/>
    <property type="project" value="UniProtKB-KW"/>
</dbReference>
<dbReference type="GO" id="GO:0008121">
    <property type="term" value="F:ubiquinol-cytochrome-c reductase activity"/>
    <property type="evidence" value="ECO:0007669"/>
    <property type="project" value="InterPro"/>
</dbReference>
<dbReference type="GO" id="GO:0006122">
    <property type="term" value="P:mitochondrial electron transport, ubiquinol to cytochrome c"/>
    <property type="evidence" value="ECO:0007669"/>
    <property type="project" value="TreeGrafter"/>
</dbReference>
<dbReference type="CDD" id="cd00290">
    <property type="entry name" value="cytochrome_b_C"/>
    <property type="match status" value="1"/>
</dbReference>
<dbReference type="CDD" id="cd00284">
    <property type="entry name" value="Cytochrome_b_N"/>
    <property type="match status" value="1"/>
</dbReference>
<dbReference type="FunFam" id="1.20.810.10:FF:000002">
    <property type="entry name" value="Cytochrome b"/>
    <property type="match status" value="1"/>
</dbReference>
<dbReference type="Gene3D" id="1.20.810.10">
    <property type="entry name" value="Cytochrome Bc1 Complex, Chain C"/>
    <property type="match status" value="1"/>
</dbReference>
<dbReference type="InterPro" id="IPR005798">
    <property type="entry name" value="Cyt_b/b6_C"/>
</dbReference>
<dbReference type="InterPro" id="IPR036150">
    <property type="entry name" value="Cyt_b/b6_C_sf"/>
</dbReference>
<dbReference type="InterPro" id="IPR005797">
    <property type="entry name" value="Cyt_b/b6_N"/>
</dbReference>
<dbReference type="InterPro" id="IPR027387">
    <property type="entry name" value="Cytb/b6-like_sf"/>
</dbReference>
<dbReference type="InterPro" id="IPR030689">
    <property type="entry name" value="Cytochrome_b"/>
</dbReference>
<dbReference type="InterPro" id="IPR048260">
    <property type="entry name" value="Cytochrome_b_C_euk/bac"/>
</dbReference>
<dbReference type="InterPro" id="IPR048259">
    <property type="entry name" value="Cytochrome_b_N_euk/bac"/>
</dbReference>
<dbReference type="InterPro" id="IPR016174">
    <property type="entry name" value="Di-haem_cyt_TM"/>
</dbReference>
<dbReference type="PANTHER" id="PTHR19271">
    <property type="entry name" value="CYTOCHROME B"/>
    <property type="match status" value="1"/>
</dbReference>
<dbReference type="PANTHER" id="PTHR19271:SF16">
    <property type="entry name" value="CYTOCHROME B"/>
    <property type="match status" value="1"/>
</dbReference>
<dbReference type="Pfam" id="PF00032">
    <property type="entry name" value="Cytochrom_B_C"/>
    <property type="match status" value="1"/>
</dbReference>
<dbReference type="Pfam" id="PF00033">
    <property type="entry name" value="Cytochrome_B"/>
    <property type="match status" value="1"/>
</dbReference>
<dbReference type="PIRSF" id="PIRSF038885">
    <property type="entry name" value="COB"/>
    <property type="match status" value="1"/>
</dbReference>
<dbReference type="SUPFAM" id="SSF81648">
    <property type="entry name" value="a domain/subunit of cytochrome bc1 complex (Ubiquinol-cytochrome c reductase)"/>
    <property type="match status" value="1"/>
</dbReference>
<dbReference type="SUPFAM" id="SSF81342">
    <property type="entry name" value="Transmembrane di-heme cytochromes"/>
    <property type="match status" value="1"/>
</dbReference>
<dbReference type="PROSITE" id="PS51003">
    <property type="entry name" value="CYTB_CTER"/>
    <property type="match status" value="1"/>
</dbReference>
<dbReference type="PROSITE" id="PS51002">
    <property type="entry name" value="CYTB_NTER"/>
    <property type="match status" value="1"/>
</dbReference>
<evidence type="ECO:0000250" key="1"/>
<evidence type="ECO:0000250" key="2">
    <source>
        <dbReference type="UniProtKB" id="P00157"/>
    </source>
</evidence>
<evidence type="ECO:0000255" key="3">
    <source>
        <dbReference type="PROSITE-ProRule" id="PRU00967"/>
    </source>
</evidence>
<evidence type="ECO:0000255" key="4">
    <source>
        <dbReference type="PROSITE-ProRule" id="PRU00968"/>
    </source>
</evidence>
<comment type="function">
    <text evidence="2">Component of the ubiquinol-cytochrome c reductase complex (complex III or cytochrome b-c1 complex) that is part of the mitochondrial respiratory chain. The b-c1 complex mediates electron transfer from ubiquinol to cytochrome c. Contributes to the generation of a proton gradient across the mitochondrial membrane that is then used for ATP synthesis.</text>
</comment>
<comment type="cofactor">
    <cofactor evidence="2">
        <name>heme b</name>
        <dbReference type="ChEBI" id="CHEBI:60344"/>
    </cofactor>
    <text evidence="2">Binds 2 heme b groups non-covalently.</text>
</comment>
<comment type="subunit">
    <text evidence="2">The cytochrome bc1 complex contains 11 subunits: 3 respiratory subunits (MT-CYB, CYC1 and UQCRFS1), 2 core proteins (UQCRC1 and UQCRC2) and 6 low-molecular weight proteins (UQCRH/QCR6, UQCRB/QCR7, UQCRQ/QCR8, UQCR10/QCR9, UQCR11/QCR10 and a cleavage product of UQCRFS1). This cytochrome bc1 complex then forms a dimer.</text>
</comment>
<comment type="subcellular location">
    <subcellularLocation>
        <location evidence="2">Mitochondrion inner membrane</location>
        <topology evidence="2">Multi-pass membrane protein</topology>
    </subcellularLocation>
</comment>
<comment type="miscellaneous">
    <text evidence="1">Heme 1 (or BL or b562) is low-potential and absorbs at about 562 nm, and heme 2 (or BH or b566) is high-potential and absorbs at about 566 nm.</text>
</comment>
<comment type="similarity">
    <text evidence="3 4">Belongs to the cytochrome b family.</text>
</comment>
<comment type="caution">
    <text evidence="2">The full-length protein contains only eight transmembrane helices, not nine as predicted by bioinformatics tools.</text>
</comment>
<name>CYB_SPELE</name>
<gene>
    <name type="primary">MT-CYB</name>
    <name type="synonym">COB</name>
    <name type="synonym">CYTB</name>
    <name type="synonym">MTCYB</name>
</gene>
<reference key="1">
    <citation type="journal article" date="2003" name="J. Mammal. Evol.">
        <title>Phylogeny and evolutionary history of the ground squirrels (Rodentia: Marmotinae).</title>
        <authorList>
            <person name="Harrison R.G."/>
            <person name="Bogdanowicz S.M."/>
            <person name="Hoffmann R.S."/>
            <person name="Yensen E."/>
            <person name="Sherman P.W."/>
        </authorList>
    </citation>
    <scope>NUCLEOTIDE SEQUENCE [GENOMIC DNA]</scope>
</reference>
<keyword id="KW-0249">Electron transport</keyword>
<keyword id="KW-0349">Heme</keyword>
<keyword id="KW-0408">Iron</keyword>
<keyword id="KW-0472">Membrane</keyword>
<keyword id="KW-0479">Metal-binding</keyword>
<keyword id="KW-0496">Mitochondrion</keyword>
<keyword id="KW-0999">Mitochondrion inner membrane</keyword>
<keyword id="KW-0679">Respiratory chain</keyword>
<keyword id="KW-0812">Transmembrane</keyword>
<keyword id="KW-1133">Transmembrane helix</keyword>
<keyword id="KW-0813">Transport</keyword>
<keyword id="KW-0830">Ubiquinone</keyword>
<accession>Q9TF80</accession>
<proteinExistence type="inferred from homology"/>